<feature type="chain" id="PRO_0000446374" description="Catenin beta-1">
    <location>
        <begin position="1"/>
        <end position="780"/>
    </location>
</feature>
<feature type="repeat" description="ARM 1" evidence="4">
    <location>
        <begin position="140"/>
        <end position="179"/>
    </location>
</feature>
<feature type="repeat" description="ARM 2" evidence="4">
    <location>
        <begin position="224"/>
        <end position="263"/>
    </location>
</feature>
<feature type="repeat" description="ARM 3" evidence="4">
    <location>
        <begin position="266"/>
        <end position="305"/>
    </location>
</feature>
<feature type="repeat" description="ARM 4" evidence="4">
    <location>
        <begin position="350"/>
        <end position="389"/>
    </location>
</feature>
<feature type="repeat" description="ARM 5" evidence="5">
    <location>
        <begin position="399"/>
        <end position="430"/>
    </location>
</feature>
<feature type="repeat" description="ARM 6" evidence="4">
    <location>
        <begin position="431"/>
        <end position="472"/>
    </location>
</feature>
<feature type="repeat" description="ARM 7" evidence="4">
    <location>
        <begin position="478"/>
        <end position="518"/>
    </location>
</feature>
<feature type="repeat" description="ARM 8" evidence="4">
    <location>
        <begin position="520"/>
        <end position="561"/>
    </location>
</feature>
<feature type="repeat" description="ARM 9" evidence="4">
    <location>
        <begin position="583"/>
        <end position="622"/>
    </location>
</feature>
<feature type="repeat" description="ARM 10" evidence="4">
    <location>
        <begin position="624"/>
        <end position="663"/>
    </location>
</feature>
<feature type="region of interest" description="Disordered" evidence="6">
    <location>
        <begin position="34"/>
        <end position="56"/>
    </location>
</feature>
<feature type="region of interest" description="Disordered" evidence="6">
    <location>
        <begin position="735"/>
        <end position="770"/>
    </location>
</feature>
<feature type="compositionally biased region" description="Basic and acidic residues" evidence="6">
    <location>
        <begin position="735"/>
        <end position="744"/>
    </location>
</feature>
<feature type="sequence conflict" description="In Ref. 1; AAC59732." evidence="18" ref="1">
    <original>K</original>
    <variation>N</variation>
    <location>
        <position position="241"/>
    </location>
</feature>
<feature type="sequence conflict" description="In Ref. 3; AAH47815." evidence="18" ref="3">
    <original>M</original>
    <variation>V</variation>
    <location>
        <position position="242"/>
    </location>
</feature>
<feature type="sequence conflict" description="In Ref. 1; AAC59732." evidence="18" ref="1">
    <original>Y</original>
    <variation>H</variation>
    <location>
        <position position="253"/>
    </location>
</feature>
<feature type="sequence conflict" description="In Ref. 3; AAH47815." evidence="18" ref="3">
    <original>L</original>
    <variation>P</variation>
    <location>
        <position position="446"/>
    </location>
</feature>
<feature type="sequence conflict" description="In Ref. 1; AAC59732." evidence="18" ref="1">
    <original>G</original>
    <variation>A</variation>
    <location>
        <position position="571"/>
    </location>
</feature>
<feature type="helix" evidence="21">
    <location>
        <begin position="130"/>
        <end position="160"/>
    </location>
</feature>
<feature type="helix" evidence="21">
    <location>
        <begin position="164"/>
        <end position="178"/>
    </location>
</feature>
<feature type="helix" evidence="21">
    <location>
        <begin position="181"/>
        <end position="187"/>
    </location>
</feature>
<feature type="helix" evidence="21">
    <location>
        <begin position="191"/>
        <end position="203"/>
    </location>
</feature>
<feature type="helix" evidence="21">
    <location>
        <begin position="207"/>
        <end position="221"/>
    </location>
</feature>
<feature type="helix" evidence="21">
    <location>
        <begin position="224"/>
        <end position="232"/>
    </location>
</feature>
<feature type="helix" evidence="21">
    <location>
        <begin position="235"/>
        <end position="242"/>
    </location>
</feature>
<feature type="helix" evidence="21">
    <location>
        <begin position="248"/>
        <end position="264"/>
    </location>
</feature>
<feature type="helix" evidence="21">
    <location>
        <begin position="268"/>
        <end position="274"/>
    </location>
</feature>
<feature type="helix" evidence="21">
    <location>
        <begin position="277"/>
        <end position="283"/>
    </location>
</feature>
<feature type="helix" evidence="21">
    <location>
        <begin position="284"/>
        <end position="286"/>
    </location>
</feature>
<feature type="helix" evidence="21">
    <location>
        <begin position="290"/>
        <end position="304"/>
    </location>
</feature>
<feature type="helix" evidence="21">
    <location>
        <begin position="308"/>
        <end position="315"/>
    </location>
</feature>
<feature type="turn" evidence="21">
    <location>
        <begin position="316"/>
        <end position="318"/>
    </location>
</feature>
<feature type="helix" evidence="21">
    <location>
        <begin position="319"/>
        <end position="327"/>
    </location>
</feature>
<feature type="helix" evidence="21">
    <location>
        <begin position="333"/>
        <end position="347"/>
    </location>
</feature>
<feature type="helix" evidence="21">
    <location>
        <begin position="352"/>
        <end position="358"/>
    </location>
</feature>
<feature type="helix" evidence="21">
    <location>
        <begin position="361"/>
        <end position="365"/>
    </location>
</feature>
<feature type="helix" evidence="21">
    <location>
        <begin position="366"/>
        <end position="368"/>
    </location>
</feature>
<feature type="helix" evidence="21">
    <location>
        <begin position="374"/>
        <end position="388"/>
    </location>
</feature>
<feature type="helix" evidence="21">
    <location>
        <begin position="398"/>
        <end position="407"/>
    </location>
</feature>
<feature type="helix" evidence="21">
    <location>
        <begin position="413"/>
        <end position="426"/>
    </location>
</feature>
<feature type="helix" evidence="21">
    <location>
        <begin position="431"/>
        <end position="438"/>
    </location>
</feature>
<feature type="turn" evidence="21">
    <location>
        <begin position="439"/>
        <end position="441"/>
    </location>
</feature>
<feature type="helix" evidence="21">
    <location>
        <begin position="442"/>
        <end position="453"/>
    </location>
</feature>
<feature type="helix" evidence="21">
    <location>
        <begin position="457"/>
        <end position="469"/>
    </location>
</feature>
<feature type="strand" evidence="21">
    <location>
        <begin position="472"/>
        <end position="474"/>
    </location>
</feature>
<feature type="helix" evidence="21">
    <location>
        <begin position="477"/>
        <end position="486"/>
    </location>
</feature>
<feature type="helix" evidence="21">
    <location>
        <begin position="490"/>
        <end position="495"/>
    </location>
</feature>
<feature type="helix" evidence="21">
    <location>
        <begin position="503"/>
        <end position="517"/>
    </location>
</feature>
<feature type="helix" evidence="21">
    <location>
        <begin position="520"/>
        <end position="528"/>
    </location>
</feature>
<feature type="helix" evidence="21">
    <location>
        <begin position="531"/>
        <end position="548"/>
    </location>
</feature>
<feature type="helix" evidence="21">
    <location>
        <begin position="565"/>
        <end position="579"/>
    </location>
</feature>
<feature type="helix" evidence="21">
    <location>
        <begin position="583"/>
        <end position="591"/>
    </location>
</feature>
<feature type="helix" evidence="21">
    <location>
        <begin position="595"/>
        <end position="600"/>
    </location>
</feature>
<feature type="helix" evidence="21">
    <location>
        <begin position="601"/>
        <end position="603"/>
    </location>
</feature>
<feature type="helix" evidence="21">
    <location>
        <begin position="607"/>
        <end position="621"/>
    </location>
</feature>
<feature type="helix" evidence="21">
    <location>
        <begin position="624"/>
        <end position="632"/>
    </location>
</feature>
<feature type="helix" evidence="21">
    <location>
        <begin position="636"/>
        <end position="641"/>
    </location>
</feature>
<feature type="helix" evidence="21">
    <location>
        <begin position="642"/>
        <end position="644"/>
    </location>
</feature>
<feature type="helix" evidence="21">
    <location>
        <begin position="648"/>
        <end position="662"/>
    </location>
</feature>
<feature type="helix" evidence="21">
    <location>
        <begin position="669"/>
        <end position="680"/>
    </location>
</feature>
<comment type="function">
    <text evidence="2 3 14 16">Key downstream component of the canonical Wnt signaling pathway (By similarity). In the absence of Wnt, forms a complex with axin1, axin2, apc, csnk1a1 and gsk3b that promotes phosphorylation on N-terminal Ser and Thr residues and ubiquitination of ctnnb1 and its subsequent degradation by the proteasome (By similarity). In the presence of Wnt ligand, ctnnb1 is not ubiquitinated and accumulates in the nucleus, where it acts as a coactivator for transcription factors of the TCF/LEF family, leading to activate Wnt responsive genes (By similarity). Plays a key role in dorsoventral patterning: in prospective ventral blastomeres, its down-regulation by axin1 and axin2 leads to inhibit the Wnt signaling pathway, while in prospective dorsal blastomeres, degradation of axin results in stabilization and nuclear translocation of ctnnb1 (PubMed:30467143, PubMed:8562427).</text>
</comment>
<comment type="subunit">
    <text evidence="7 15">Interacts with adnpa (PubMed:32533114). Interacts with cdh1 during oogenesis and in the unfertilized egg (PubMed:10456847). Interacts with ctnna1 and cdh2 (PubMed:10456847).</text>
</comment>
<comment type="subcellular location">
    <subcellularLocation>
        <location evidence="7">Cytoplasm</location>
    </subcellularLocation>
    <subcellularLocation>
        <location evidence="8 11 12 14">Nucleus</location>
    </subcellularLocation>
    <subcellularLocation>
        <location evidence="8 11 12 13 14">Cell membrane</location>
    </subcellularLocation>
    <subcellularLocation>
        <location evidence="7">Cell junction</location>
    </subcellularLocation>
    <subcellularLocation>
        <location evidence="7 10">Cell junction</location>
        <location evidence="7 10">Adherens junction</location>
    </subcellularLocation>
    <text evidence="1 2 7">Cytoplasmic when it is un-stable (highly phosphorylated). Translocates to the nucleus when it is stabilized (low level of phosphorylation). The majority of beta-catenin is localized to the cell membrane. Localized in the ooplasm during the initial stages of oogenesis (PubMed:10456847).</text>
</comment>
<comment type="tissue specificity">
    <text evidence="7 9 12">Expressed in the successional lamina, also expressed in both the epithelial and mesenchymal cells of the developing replacement tooth (at protein level) (PubMed:26938059). Expressed in the enamel organ as well as in the inner and outer dental epithelium during replacement tooth morphogenesis (at protein level) (PubMed:26938059). Expressed in the differentiated, polarized odontoblasts that line the dentine matrix as well as in the inner and outer dental epithelium during tooth cytodifferentiation (at protein level) (PubMed:26938059). Expressed in the reduced enamel organ, odontoblasts and weakly at the center of the dental papilla of the functional tooth as well as in the epithelial crypts surrounding the functional tooth (at protein level) (PubMed:26938059). Expressed in the liver (at protein level) (PubMed:10456847). Expressed at intercalated disks in the heart (at protein level) (PubMed:18682726). Expressed in the ovary (PubMed:10456847).</text>
</comment>
<comment type="developmental stage">
    <text evidence="7 8 11 16">Expressed in the cortical ooplasm during the primary growth phase, expression increases during the cortical alveolus stage at areas of contact between the oocyte and the surrounding follicle cells (at protein level) (PubMed:10456847). Expressed at contact points between oocyte microvilli and follicle cells during stage 2 of follicle development (at protein level) (PubMed:10456847). Expressed at the oocyte border, cell-cell contacts surrounding the follicle cells and microvilli projecting into the vitelline envelope during stage 3 of follicle development (at protein level) (PubMed:10456847). Expressed in oocytes during oogenesis from stage 1 of development until developed unfertilized eggs, expression is most abundant during initial stages of oogenesis and during oocyte maturation (PubMed:10456847). Expressed maternally and is widely distributed in the early embryo (PubMed:8562427). Expressed in the posterior ventral and lateral mesodermal, and ectodermal cells during gastrulation (PubMed:25371059). Expressed in the region of the developing heart at 72 hpf (at protein level) (PubMed:15494018).</text>
</comment>
<comment type="PTM">
    <text evidence="2">Phosphorylation by gsk3b promotes ubiquitination and subsequent degradation by the proteasome.</text>
</comment>
<comment type="PTM">
    <text evidence="2">Ubiquitinated when phosphorylated by gsk3b, leading to its degradation.</text>
</comment>
<comment type="similarity">
    <text evidence="18">Belongs to the beta-catenin family.</text>
</comment>
<comment type="sequence caution" evidence="18">
    <conflict type="erroneous gene model prediction">
        <sequence resource="EMBL" id="CABZ01038334"/>
    </conflict>
</comment>
<accession>F1QGH7</accession>
<accession>A0A0N4SUA5</accession>
<accession>Q7ZU14</accession>
<accession>Q90424</accession>
<sequence>MATQSDLMELEMAMDPDRKAAVSHWQQQSYLDSGIHSGATTTAPSLSGKGNPEDDDVDNQVLYEWEQGFNQSFNQEQVADIDGQYAMTRAQRVRAAMFPETLDEGMQIPSTQFDSAHPTNVQRLAEPSQMLKHAVVNLINYQDDAELATRAIPELTKLLNDEDQVVVNKAAVMVHQLSKKEASRHAIMRSPQMVSAIVRTMQNTNDVETARCTSGTLHNLSHHREGLLAIFKSGGIPALVKMLGSPVDSVLFYAITTLHNLLLHQEGAKMAVRLAGGLQKMVALLNKTNVKFLAITTDCLQILAYGNQESKLIILASGGPQALVNIMRTYTYEKLLWTTSRVLKVLSVCSSNKPAIVEAGGMQALGLHLTDPSQRLVQNCLWTLRNLSDAATKQEGMEGLLGTLVQLLGSDDINVVTCAAGILSNLTCNNYKNKMMVCQVGGIEALVRTVLRAGDREDITEPAICALRHLTSRHQDAEMAQNAVRLHYGLPVVVKLLHPPSHWPLIKATVGLIRNLALCPANHAPLREQGAIPRLVQLLVRAHQDTQRRTSMGGTQQQFVEGVRMEEIVEGCTGALHILARDIHNRIVIRGLNTIPLFVQLLYSPIENIQRVAAGVLCELAQDKEAAEAIEAEGATAPLTELLHSRNEGVATYAAAVLFRMSEDKPQDYKKRLSVELTSSLFRTEPMTWNETGDLGLDIGAQGEPLGYRQDDPSYRSFHSGGYGQDAMGMDPMMEHEMAGHHPGPDYPVDGLPDLGHTQDLIDGLPPGDSNQLAWFDTDL</sequence>
<organism>
    <name type="scientific">Danio rerio</name>
    <name type="common">Zebrafish</name>
    <name type="synonym">Brachydanio rerio</name>
    <dbReference type="NCBI Taxonomy" id="7955"/>
    <lineage>
        <taxon>Eukaryota</taxon>
        <taxon>Metazoa</taxon>
        <taxon>Chordata</taxon>
        <taxon>Craniata</taxon>
        <taxon>Vertebrata</taxon>
        <taxon>Euteleostomi</taxon>
        <taxon>Actinopterygii</taxon>
        <taxon>Neopterygii</taxon>
        <taxon>Teleostei</taxon>
        <taxon>Ostariophysi</taxon>
        <taxon>Cypriniformes</taxon>
        <taxon>Danionidae</taxon>
        <taxon>Danioninae</taxon>
        <taxon>Danio</taxon>
    </lineage>
</organism>
<proteinExistence type="evidence at protein level"/>
<gene>
    <name evidence="19" type="primary">ctnnb1</name>
</gene>
<name>CTNB1_DANRE</name>
<reference key="1">
    <citation type="journal article" date="1995" name="Mech. Dev.">
        <title>Induction of a secondary embryonic axis in zebrafish occurs following the overexpression of beta-catenin.</title>
        <authorList>
            <person name="Kelly G.M."/>
            <person name="Erezyilmaz D.F."/>
            <person name="Moon R.T."/>
        </authorList>
    </citation>
    <scope>NUCLEOTIDE SEQUENCE [MRNA]</scope>
    <scope>FUNCTION</scope>
    <scope>DEVELOPMENTAL STAGE</scope>
</reference>
<reference key="2">
    <citation type="journal article" date="2013" name="Nature">
        <title>The zebrafish reference genome sequence and its relationship to the human genome.</title>
        <authorList>
            <person name="Howe K."/>
            <person name="Clark M.D."/>
            <person name="Torroja C.F."/>
            <person name="Torrance J."/>
            <person name="Berthelot C."/>
            <person name="Muffato M."/>
            <person name="Collins J.E."/>
            <person name="Humphray S."/>
            <person name="McLaren K."/>
            <person name="Matthews L."/>
            <person name="McLaren S."/>
            <person name="Sealy I."/>
            <person name="Caccamo M."/>
            <person name="Churcher C."/>
            <person name="Scott C."/>
            <person name="Barrett J.C."/>
            <person name="Koch R."/>
            <person name="Rauch G.J."/>
            <person name="White S."/>
            <person name="Chow W."/>
            <person name="Kilian B."/>
            <person name="Quintais L.T."/>
            <person name="Guerra-Assuncao J.A."/>
            <person name="Zhou Y."/>
            <person name="Gu Y."/>
            <person name="Yen J."/>
            <person name="Vogel J.H."/>
            <person name="Eyre T."/>
            <person name="Redmond S."/>
            <person name="Banerjee R."/>
            <person name="Chi J."/>
            <person name="Fu B."/>
            <person name="Langley E."/>
            <person name="Maguire S.F."/>
            <person name="Laird G.K."/>
            <person name="Lloyd D."/>
            <person name="Kenyon E."/>
            <person name="Donaldson S."/>
            <person name="Sehra H."/>
            <person name="Almeida-King J."/>
            <person name="Loveland J."/>
            <person name="Trevanion S."/>
            <person name="Jones M."/>
            <person name="Quail M."/>
            <person name="Willey D."/>
            <person name="Hunt A."/>
            <person name="Burton J."/>
            <person name="Sims S."/>
            <person name="McLay K."/>
            <person name="Plumb B."/>
            <person name="Davis J."/>
            <person name="Clee C."/>
            <person name="Oliver K."/>
            <person name="Clark R."/>
            <person name="Riddle C."/>
            <person name="Elliot D."/>
            <person name="Threadgold G."/>
            <person name="Harden G."/>
            <person name="Ware D."/>
            <person name="Begum S."/>
            <person name="Mortimore B."/>
            <person name="Kerry G."/>
            <person name="Heath P."/>
            <person name="Phillimore B."/>
            <person name="Tracey A."/>
            <person name="Corby N."/>
            <person name="Dunn M."/>
            <person name="Johnson C."/>
            <person name="Wood J."/>
            <person name="Clark S."/>
            <person name="Pelan S."/>
            <person name="Griffiths G."/>
            <person name="Smith M."/>
            <person name="Glithero R."/>
            <person name="Howden P."/>
            <person name="Barker N."/>
            <person name="Lloyd C."/>
            <person name="Stevens C."/>
            <person name="Harley J."/>
            <person name="Holt K."/>
            <person name="Panagiotidis G."/>
            <person name="Lovell J."/>
            <person name="Beasley H."/>
            <person name="Henderson C."/>
            <person name="Gordon D."/>
            <person name="Auger K."/>
            <person name="Wright D."/>
            <person name="Collins J."/>
            <person name="Raisen C."/>
            <person name="Dyer L."/>
            <person name="Leung K."/>
            <person name="Robertson L."/>
            <person name="Ambridge K."/>
            <person name="Leongamornlert D."/>
            <person name="McGuire S."/>
            <person name="Gilderthorp R."/>
            <person name="Griffiths C."/>
            <person name="Manthravadi D."/>
            <person name="Nichol S."/>
            <person name="Barker G."/>
            <person name="Whitehead S."/>
            <person name="Kay M."/>
            <person name="Brown J."/>
            <person name="Murnane C."/>
            <person name="Gray E."/>
            <person name="Humphries M."/>
            <person name="Sycamore N."/>
            <person name="Barker D."/>
            <person name="Saunders D."/>
            <person name="Wallis J."/>
            <person name="Babbage A."/>
            <person name="Hammond S."/>
            <person name="Mashreghi-Mohammadi M."/>
            <person name="Barr L."/>
            <person name="Martin S."/>
            <person name="Wray P."/>
            <person name="Ellington A."/>
            <person name="Matthews N."/>
            <person name="Ellwood M."/>
            <person name="Woodmansey R."/>
            <person name="Clark G."/>
            <person name="Cooper J."/>
            <person name="Tromans A."/>
            <person name="Grafham D."/>
            <person name="Skuce C."/>
            <person name="Pandian R."/>
            <person name="Andrews R."/>
            <person name="Harrison E."/>
            <person name="Kimberley A."/>
            <person name="Garnett J."/>
            <person name="Fosker N."/>
            <person name="Hall R."/>
            <person name="Garner P."/>
            <person name="Kelly D."/>
            <person name="Bird C."/>
            <person name="Palmer S."/>
            <person name="Gehring I."/>
            <person name="Berger A."/>
            <person name="Dooley C.M."/>
            <person name="Ersan-Urun Z."/>
            <person name="Eser C."/>
            <person name="Geiger H."/>
            <person name="Geisler M."/>
            <person name="Karotki L."/>
            <person name="Kirn A."/>
            <person name="Konantz J."/>
            <person name="Konantz M."/>
            <person name="Oberlander M."/>
            <person name="Rudolph-Geiger S."/>
            <person name="Teucke M."/>
            <person name="Lanz C."/>
            <person name="Raddatz G."/>
            <person name="Osoegawa K."/>
            <person name="Zhu B."/>
            <person name="Rapp A."/>
            <person name="Widaa S."/>
            <person name="Langford C."/>
            <person name="Yang F."/>
            <person name="Schuster S.C."/>
            <person name="Carter N.P."/>
            <person name="Harrow J."/>
            <person name="Ning Z."/>
            <person name="Herrero J."/>
            <person name="Searle S.M."/>
            <person name="Enright A."/>
            <person name="Geisler R."/>
            <person name="Plasterk R.H."/>
            <person name="Lee C."/>
            <person name="Westerfield M."/>
            <person name="de Jong P.J."/>
            <person name="Zon L.I."/>
            <person name="Postlethwait J.H."/>
            <person name="Nusslein-Volhard C."/>
            <person name="Hubbard T.J."/>
            <person name="Roest Crollius H."/>
            <person name="Rogers J."/>
            <person name="Stemple D.L."/>
        </authorList>
    </citation>
    <scope>NUCLEOTIDE SEQUENCE [LARGE SCALE GENOMIC DNA]</scope>
    <source>
        <strain>Tuebingen</strain>
    </source>
</reference>
<reference key="3">
    <citation type="submission" date="2003-03" db="EMBL/GenBank/DDBJ databases">
        <authorList>
            <consortium name="NIH - Zebrafish Gene Collection (ZGC) project"/>
        </authorList>
    </citation>
    <scope>NUCLEOTIDE SEQUENCE [LARGE SCALE MRNA]</scope>
    <source>
        <strain>AB</strain>
    </source>
</reference>
<reference key="4">
    <citation type="journal article" date="1999" name="Biol. Reprod.">
        <title>Cadherin-catenin complexes during zebrafish oogenesis: heterotypic junctions between oocytes and follicle cells.</title>
        <authorList>
            <person name="Cerda J."/>
            <person name="Reidenbach S."/>
            <person name="Praetzel S."/>
            <person name="Franke W.W."/>
        </authorList>
    </citation>
    <scope>INTERACTION WITH CTNNA1; CDH1 AND CDH2</scope>
    <scope>SUBCELLULAR LOCATION</scope>
    <scope>DEVELOPMENTAL STAGE</scope>
    <scope>TISSUE SPECIFICITY</scope>
</reference>
<reference key="5">
    <citation type="journal article" date="2004" name="Biochem. Soc. Trans.">
        <title>Plakoglobin expression and localization in zebrafish embryo development.</title>
        <authorList>
            <person name="Martin E.D."/>
            <person name="Grealy M."/>
        </authorList>
    </citation>
    <scope>SUBCELLULAR LOCATION</scope>
    <scope>DEVELOPMENTAL STAGE</scope>
</reference>
<reference key="6">
    <citation type="journal article" date="2008" name="PLoS ONE">
        <title>Emergence of Xin demarcates a key innovation in heart evolution.</title>
        <authorList>
            <person name="Grosskurth S.E."/>
            <person name="Bhattacharya D."/>
            <person name="Wang Q."/>
            <person name="Lin J.J."/>
        </authorList>
    </citation>
    <scope>TISSUE SPECIFICITY</scope>
</reference>
<reference key="7">
    <citation type="journal article" date="2009" name="Dev. Biol.">
        <title>Plakoglobin has both structural and signalling roles in zebrafish development.</title>
        <authorList>
            <person name="Martin E.D."/>
            <person name="Moriarty M.A."/>
            <person name="Byrnes L."/>
            <person name="Grealy M."/>
        </authorList>
    </citation>
    <scope>SUBCELLULAR LOCATION</scope>
</reference>
<reference key="8">
    <citation type="journal article" date="2014" name="Nat. Commun.">
        <title>Tissue-specific derepression of TCF/LEF controls the activity of the Wnt/beta-catenin pathway.</title>
        <authorList>
            <person name="Lu F.I."/>
            <person name="Sun Y.H."/>
            <person name="Wei C.Y."/>
            <person name="Thisse C."/>
            <person name="Thisse B."/>
        </authorList>
    </citation>
    <scope>SUBCELLULAR LOCATION</scope>
    <scope>DEVELOPMENTAL STAGE</scope>
</reference>
<reference key="9">
    <citation type="journal article" date="2016" name="PLoS ONE">
        <title>Beta-Catenin and Plakoglobin Expression during Zebrafish Tooth Development and Replacement.</title>
        <authorList>
            <person name="Verstraeten B."/>
            <person name="van Hengel J."/>
            <person name="Huysseune A."/>
        </authorList>
    </citation>
    <scope>SUBCELLULAR LOCATION</scope>
    <scope>TISSUE SPECIFICITY</scope>
</reference>
<reference key="10">
    <citation type="journal article" date="2018" name="Genetics">
        <title>Probing Cadherin Interactions in Zebrafish with E- and N-Cadherin Missense Mutants.</title>
        <authorList>
            <person name="Warga R.M."/>
            <person name="Kane D.A."/>
        </authorList>
    </citation>
    <scope>SUBCELLULAR LOCATION</scope>
</reference>
<reference key="11">
    <citation type="journal article" date="2018" name="Science">
        <title>Maternal Huluwa dictates the embryonic body axis through beta-catenin in vertebrates.</title>
        <authorList>
            <person name="Yan L."/>
            <person name="Chen J."/>
            <person name="Zhu X."/>
            <person name="Sun J."/>
            <person name="Wu X."/>
            <person name="Shen W."/>
            <person name="Zhang W."/>
            <person name="Tao Q."/>
            <person name="Meng A."/>
        </authorList>
    </citation>
    <scope>FUNCTION</scope>
    <scope>SUBCELLULAR LOCATION</scope>
</reference>
<reference evidence="18" key="12">
    <citation type="journal article" date="2020" name="Nat. Commun.">
        <title>ADNP promotes neural differentiation by modulating Wnt/beta-catenin signaling.</title>
        <authorList>
            <person name="Sun X."/>
            <person name="Peng X."/>
            <person name="Cao Y."/>
            <person name="Zhou Y."/>
            <person name="Sun Y."/>
        </authorList>
    </citation>
    <scope>INTERACTION WITH ADNPA</scope>
</reference>
<reference evidence="20" key="13">
    <citation type="journal article" date="2008" name="Structure">
        <title>Crystal structure of a full-length beta-catenin.</title>
        <authorList>
            <person name="Xing Y."/>
            <person name="Takemaru K."/>
            <person name="Liu J."/>
            <person name="Berndt J.D."/>
            <person name="Zheng J.J."/>
            <person name="Moon R.T."/>
            <person name="Xu W."/>
        </authorList>
    </citation>
    <scope>X-RAY CRYSTALLOGRAPHY (3.40 ANGSTROMS)</scope>
</reference>
<evidence type="ECO:0000250" key="1">
    <source>
        <dbReference type="UniProtKB" id="B6V8E6"/>
    </source>
</evidence>
<evidence type="ECO:0000250" key="2">
    <source>
        <dbReference type="UniProtKB" id="P35222"/>
    </source>
</evidence>
<evidence type="ECO:0000250" key="3">
    <source>
        <dbReference type="UniProtKB" id="Q02248"/>
    </source>
</evidence>
<evidence type="ECO:0000255" key="4"/>
<evidence type="ECO:0000255" key="5">
    <source>
        <dbReference type="PROSITE-ProRule" id="PRU00259"/>
    </source>
</evidence>
<evidence type="ECO:0000256" key="6">
    <source>
        <dbReference type="SAM" id="MobiDB-lite"/>
    </source>
</evidence>
<evidence type="ECO:0000269" key="7">
    <source>
    </source>
</evidence>
<evidence type="ECO:0000269" key="8">
    <source>
    </source>
</evidence>
<evidence type="ECO:0000269" key="9">
    <source>
    </source>
</evidence>
<evidence type="ECO:0000269" key="10">
    <source>
    </source>
</evidence>
<evidence type="ECO:0000269" key="11">
    <source>
    </source>
</evidence>
<evidence type="ECO:0000269" key="12">
    <source>
    </source>
</evidence>
<evidence type="ECO:0000269" key="13">
    <source>
    </source>
</evidence>
<evidence type="ECO:0000269" key="14">
    <source>
    </source>
</evidence>
<evidence type="ECO:0000269" key="15">
    <source>
    </source>
</evidence>
<evidence type="ECO:0000269" key="16">
    <source>
    </source>
</evidence>
<evidence type="ECO:0000303" key="17">
    <source>
    </source>
</evidence>
<evidence type="ECO:0000305" key="18"/>
<evidence type="ECO:0000312" key="19">
    <source>
        <dbReference type="ZFIN" id="ZDB-GENE-980526-362"/>
    </source>
</evidence>
<evidence type="ECO:0007744" key="20">
    <source>
        <dbReference type="PDB" id="2Z6G"/>
    </source>
</evidence>
<evidence type="ECO:0007829" key="21">
    <source>
        <dbReference type="PDB" id="2Z6G"/>
    </source>
</evidence>
<dbReference type="EMBL" id="U41081">
    <property type="protein sequence ID" value="AAC59732.1"/>
    <property type="molecule type" value="mRNA"/>
</dbReference>
<dbReference type="EMBL" id="CABZ01038334">
    <property type="status" value="NOT_ANNOTATED_CDS"/>
    <property type="molecule type" value="Genomic_DNA"/>
</dbReference>
<dbReference type="EMBL" id="BC047815">
    <property type="protein sequence ID" value="AAH47815.1"/>
    <property type="molecule type" value="mRNA"/>
</dbReference>
<dbReference type="RefSeq" id="NP_571134.2">
    <property type="nucleotide sequence ID" value="NM_131059.2"/>
</dbReference>
<dbReference type="PDB" id="2Z6G">
    <property type="method" value="X-ray"/>
    <property type="resolution" value="3.40 A"/>
    <property type="chains" value="A=1-780"/>
</dbReference>
<dbReference type="PDBsum" id="2Z6G"/>
<dbReference type="SMR" id="F1QGH7"/>
<dbReference type="FunCoup" id="F1QGH7">
    <property type="interactions" value="2650"/>
</dbReference>
<dbReference type="STRING" id="7955.ENSDARP00000139205"/>
<dbReference type="PaxDb" id="7955-ENSDARP00000032935"/>
<dbReference type="Ensembl" id="ENSDART00000038495">
    <property type="protein sequence ID" value="ENSDARP00000032935"/>
    <property type="gene ID" value="ENSDARG00000014571"/>
</dbReference>
<dbReference type="GeneID" id="30265"/>
<dbReference type="KEGG" id="dre:30265"/>
<dbReference type="AGR" id="ZFIN:ZDB-GENE-980526-362"/>
<dbReference type="CTD" id="1499"/>
<dbReference type="ZFIN" id="ZDB-GENE-980526-362">
    <property type="gene designation" value="ctnnb1"/>
</dbReference>
<dbReference type="eggNOG" id="KOG4203">
    <property type="taxonomic scope" value="Eukaryota"/>
</dbReference>
<dbReference type="HOGENOM" id="CLU_008757_1_1_1"/>
<dbReference type="InParanoid" id="F1QGH7"/>
<dbReference type="OrthoDB" id="195736at2759"/>
<dbReference type="PhylomeDB" id="F1QGH7"/>
<dbReference type="TreeFam" id="TF317997"/>
<dbReference type="Reactome" id="R-DRE-201681">
    <property type="pathway name" value="TCF dependent signaling in response to WNT"/>
</dbReference>
<dbReference type="Reactome" id="R-DRE-201722">
    <property type="pathway name" value="Formation of the beta-catenin:TCF transactivating complex"/>
</dbReference>
<dbReference type="Reactome" id="R-DRE-3134973">
    <property type="pathway name" value="LRR FLII-interacting protein 1 (LRRFIP1) activates type I IFN production"/>
</dbReference>
<dbReference type="Reactome" id="R-DRE-351906">
    <property type="pathway name" value="Apoptotic cleavage of cell adhesion proteins"/>
</dbReference>
<dbReference type="Reactome" id="R-DRE-3769402">
    <property type="pathway name" value="Deactivation of the beta-catenin transactivating complex"/>
</dbReference>
<dbReference type="Reactome" id="R-DRE-5218920">
    <property type="pathway name" value="VEGFR2 mediated vascular permeability"/>
</dbReference>
<dbReference type="Reactome" id="R-DRE-525793">
    <property type="pathway name" value="Myogenesis"/>
</dbReference>
<dbReference type="Reactome" id="R-DRE-5626467">
    <property type="pathway name" value="RHO GTPases activate IQGAPs"/>
</dbReference>
<dbReference type="Reactome" id="R-DRE-8853884">
    <property type="pathway name" value="Transcriptional Regulation by VENTX"/>
</dbReference>
<dbReference type="EvolutionaryTrace" id="F1QGH7"/>
<dbReference type="PRO" id="PR:F1QGH7"/>
<dbReference type="Proteomes" id="UP000000437">
    <property type="component" value="Chromosome 16"/>
</dbReference>
<dbReference type="Bgee" id="ENSDARG00000014571">
    <property type="expression patterns" value="Expressed in tail bud paraxial mesoderm and 44 other cell types or tissues"/>
</dbReference>
<dbReference type="GO" id="GO:0005912">
    <property type="term" value="C:adherens junction"/>
    <property type="evidence" value="ECO:0000314"/>
    <property type="project" value="UniProtKB"/>
</dbReference>
<dbReference type="GO" id="GO:0016342">
    <property type="term" value="C:catenin complex"/>
    <property type="evidence" value="ECO:0000314"/>
    <property type="project" value="ZFIN"/>
</dbReference>
<dbReference type="GO" id="GO:0005938">
    <property type="term" value="C:cell cortex"/>
    <property type="evidence" value="ECO:0000314"/>
    <property type="project" value="UniProtKB"/>
</dbReference>
<dbReference type="GO" id="GO:0005737">
    <property type="term" value="C:cytoplasm"/>
    <property type="evidence" value="ECO:0000318"/>
    <property type="project" value="GO_Central"/>
</dbReference>
<dbReference type="GO" id="GO:0014704">
    <property type="term" value="C:intercalated disc"/>
    <property type="evidence" value="ECO:0000314"/>
    <property type="project" value="ZFIN"/>
</dbReference>
<dbReference type="GO" id="GO:0016020">
    <property type="term" value="C:membrane"/>
    <property type="evidence" value="ECO:0000314"/>
    <property type="project" value="ZFIN"/>
</dbReference>
<dbReference type="GO" id="GO:0005902">
    <property type="term" value="C:microvillus"/>
    <property type="evidence" value="ECO:0000314"/>
    <property type="project" value="ZFIN"/>
</dbReference>
<dbReference type="GO" id="GO:0005634">
    <property type="term" value="C:nucleus"/>
    <property type="evidence" value="ECO:0000314"/>
    <property type="project" value="UniProtKB"/>
</dbReference>
<dbReference type="GO" id="GO:0005886">
    <property type="term" value="C:plasma membrane"/>
    <property type="evidence" value="ECO:0000314"/>
    <property type="project" value="UniProtKB"/>
</dbReference>
<dbReference type="GO" id="GO:0005915">
    <property type="term" value="C:zonula adherens"/>
    <property type="evidence" value="ECO:0000314"/>
    <property type="project" value="ZFIN"/>
</dbReference>
<dbReference type="GO" id="GO:0045294">
    <property type="term" value="F:alpha-catenin binding"/>
    <property type="evidence" value="ECO:0000318"/>
    <property type="project" value="GO_Central"/>
</dbReference>
<dbReference type="GO" id="GO:0045296">
    <property type="term" value="F:cadherin binding"/>
    <property type="evidence" value="ECO:0000314"/>
    <property type="project" value="ZFIN"/>
</dbReference>
<dbReference type="GO" id="GO:0016922">
    <property type="term" value="F:nuclear receptor binding"/>
    <property type="evidence" value="ECO:0000318"/>
    <property type="project" value="GO_Central"/>
</dbReference>
<dbReference type="GO" id="GO:0019903">
    <property type="term" value="F:protein phosphatase binding"/>
    <property type="evidence" value="ECO:0000318"/>
    <property type="project" value="GO_Central"/>
</dbReference>
<dbReference type="GO" id="GO:0003713">
    <property type="term" value="F:transcription coactivator activity"/>
    <property type="evidence" value="ECO:0000318"/>
    <property type="project" value="GO_Central"/>
</dbReference>
<dbReference type="GO" id="GO:0060070">
    <property type="term" value="P:canonical Wnt signaling pathway"/>
    <property type="evidence" value="ECO:0000314"/>
    <property type="project" value="UniProtKB"/>
</dbReference>
<dbReference type="GO" id="GO:0007155">
    <property type="term" value="P:cell adhesion"/>
    <property type="evidence" value="ECO:0000305"/>
    <property type="project" value="ZFIN"/>
</dbReference>
<dbReference type="GO" id="GO:0098609">
    <property type="term" value="P:cell-cell adhesion"/>
    <property type="evidence" value="ECO:0000318"/>
    <property type="project" value="GO_Central"/>
</dbReference>
<dbReference type="GO" id="GO:0060026">
    <property type="term" value="P:convergent extension"/>
    <property type="evidence" value="ECO:0000316"/>
    <property type="project" value="ZFIN"/>
</dbReference>
<dbReference type="GO" id="GO:0048262">
    <property type="term" value="P:determination of dorsal/ventral asymmetry"/>
    <property type="evidence" value="ECO:0000314"/>
    <property type="project" value="ZFIN"/>
</dbReference>
<dbReference type="GO" id="GO:0009953">
    <property type="term" value="P:dorsal/ventral pattern formation"/>
    <property type="evidence" value="ECO:0000316"/>
    <property type="project" value="ZFIN"/>
</dbReference>
<dbReference type="GO" id="GO:0007398">
    <property type="term" value="P:ectoderm development"/>
    <property type="evidence" value="ECO:0000316"/>
    <property type="project" value="ZFIN"/>
</dbReference>
<dbReference type="GO" id="GO:0000578">
    <property type="term" value="P:embryonic axis specification"/>
    <property type="evidence" value="ECO:0000315"/>
    <property type="project" value="ZFIN"/>
</dbReference>
<dbReference type="GO" id="GO:0003094">
    <property type="term" value="P:glomerular filtration"/>
    <property type="evidence" value="ECO:0000315"/>
    <property type="project" value="ZFIN"/>
</dbReference>
<dbReference type="GO" id="GO:0001889">
    <property type="term" value="P:liver development"/>
    <property type="evidence" value="ECO:0000316"/>
    <property type="project" value="ZFIN"/>
</dbReference>
<dbReference type="GO" id="GO:0045944">
    <property type="term" value="P:positive regulation of transcription by RNA polymerase II"/>
    <property type="evidence" value="ECO:0000318"/>
    <property type="project" value="GO_Central"/>
</dbReference>
<dbReference type="CDD" id="cd21724">
    <property type="entry name" value="CTNNAbd_CTNNB1"/>
    <property type="match status" value="1"/>
</dbReference>
<dbReference type="DisProt" id="DP02584"/>
<dbReference type="FunFam" id="1.25.10.10:FF:000015">
    <property type="entry name" value="Catenin beta-1"/>
    <property type="match status" value="1"/>
</dbReference>
<dbReference type="Gene3D" id="1.25.10.10">
    <property type="entry name" value="Leucine-rich Repeat Variant"/>
    <property type="match status" value="1"/>
</dbReference>
<dbReference type="IDEAL" id="IID50014"/>
<dbReference type="InterPro" id="IPR011989">
    <property type="entry name" value="ARM-like"/>
</dbReference>
<dbReference type="InterPro" id="IPR016024">
    <property type="entry name" value="ARM-type_fold"/>
</dbReference>
<dbReference type="InterPro" id="IPR000225">
    <property type="entry name" value="Armadillo"/>
</dbReference>
<dbReference type="InterPro" id="IPR013284">
    <property type="entry name" value="Beta-catenin"/>
</dbReference>
<dbReference type="PANTHER" id="PTHR45976">
    <property type="entry name" value="ARMADILLO SEGMENT POLARITY PROTEIN"/>
    <property type="match status" value="1"/>
</dbReference>
<dbReference type="Pfam" id="PF00514">
    <property type="entry name" value="Arm"/>
    <property type="match status" value="4"/>
</dbReference>
<dbReference type="PRINTS" id="PR01869">
    <property type="entry name" value="BCATNINFAMLY"/>
</dbReference>
<dbReference type="SMART" id="SM00185">
    <property type="entry name" value="ARM"/>
    <property type="match status" value="12"/>
</dbReference>
<dbReference type="SUPFAM" id="SSF48371">
    <property type="entry name" value="ARM repeat"/>
    <property type="match status" value="1"/>
</dbReference>
<dbReference type="PROSITE" id="PS50176">
    <property type="entry name" value="ARM_REPEAT"/>
    <property type="match status" value="9"/>
</dbReference>
<keyword id="KW-0002">3D-structure</keyword>
<keyword id="KW-0010">Activator</keyword>
<keyword id="KW-0965">Cell junction</keyword>
<keyword id="KW-1003">Cell membrane</keyword>
<keyword id="KW-0963">Cytoplasm</keyword>
<keyword id="KW-0472">Membrane</keyword>
<keyword id="KW-0539">Nucleus</keyword>
<keyword id="KW-0597">Phosphoprotein</keyword>
<keyword id="KW-1185">Reference proteome</keyword>
<keyword id="KW-0677">Repeat</keyword>
<keyword id="KW-0804">Transcription</keyword>
<keyword id="KW-0805">Transcription regulation</keyword>
<keyword id="KW-0832">Ubl conjugation</keyword>
<keyword id="KW-0879">Wnt signaling pathway</keyword>
<protein>
    <recommendedName>
        <fullName evidence="19">Catenin beta-1</fullName>
    </recommendedName>
    <alternativeName>
        <fullName evidence="17">Beta-catenin</fullName>
    </alternativeName>
</protein>